<protein>
    <recommendedName>
        <fullName evidence="6">Methanethiol oxidase</fullName>
        <shortName evidence="6">MTO</shortName>
        <ecNumber evidence="5">1.8.3.4</ecNumber>
    </recommendedName>
    <alternativeName>
        <fullName>56 kDa selenium-binding protein</fullName>
        <shortName>SBP56</shortName>
        <shortName>SP56</shortName>
    </alternativeName>
    <alternativeName>
        <fullName>Selenium-binding protein 1</fullName>
    </alternativeName>
</protein>
<reference key="1">
    <citation type="journal article" date="1990" name="Carcinogenesis">
        <title>DNA sequencing of a mouse liver protein that binds selenium: implications for selenium's mechanism of action in cancer prevention.</title>
        <authorList>
            <person name="Bansel M.P."/>
            <person name="Mukhopadhyay T."/>
            <person name="Scott J."/>
            <person name="Cook R.G."/>
            <person name="Mukhopadhyay R."/>
            <person name="Medina D."/>
        </authorList>
    </citation>
    <scope>NUCLEOTIDE SEQUENCE [MRNA]</scope>
    <source>
        <tissue>Liver</tissue>
    </source>
</reference>
<reference key="2">
    <citation type="journal article" date="2004" name="Genome Res.">
        <title>The status, quality, and expansion of the NIH full-length cDNA project: the Mammalian Gene Collection (MGC).</title>
        <authorList>
            <consortium name="The MGC Project Team"/>
        </authorList>
    </citation>
    <scope>NUCLEOTIDE SEQUENCE [LARGE SCALE MRNA]</scope>
    <source>
        <strain>FVB/N</strain>
        <tissue>Colon</tissue>
    </source>
</reference>
<reference key="3">
    <citation type="journal article" date="2004" name="Rapid Commun. Mass Spectrom.">
        <title>Phosphoproteome analysis of mouse liver using immobilized metal affinity purification and linear ion trap mass spectrometry.</title>
        <authorList>
            <person name="Jin W.-H."/>
            <person name="Dai J."/>
            <person name="Zhou H."/>
            <person name="Xia Q.-C."/>
            <person name="Zou H.-F."/>
            <person name="Zeng R."/>
        </authorList>
    </citation>
    <scope>PHOSPHORYLATION AT SER-467</scope>
</reference>
<reference key="4">
    <citation type="journal article" date="2010" name="Cell">
        <title>A tissue-specific atlas of mouse protein phosphorylation and expression.</title>
        <authorList>
            <person name="Huttlin E.L."/>
            <person name="Jedrychowski M.P."/>
            <person name="Elias J.E."/>
            <person name="Goswami T."/>
            <person name="Rad R."/>
            <person name="Beausoleil S.A."/>
            <person name="Villen J."/>
            <person name="Haas W."/>
            <person name="Sowa M.E."/>
            <person name="Gygi S.P."/>
        </authorList>
    </citation>
    <scope>IDENTIFICATION BY MASS SPECTROMETRY [LARGE SCALE ANALYSIS]</scope>
    <source>
        <tissue>Brown adipose tissue</tissue>
        <tissue>Heart</tissue>
        <tissue>Kidney</tissue>
        <tissue>Liver</tissue>
        <tissue>Lung</tissue>
        <tissue>Pancreas</tissue>
        <tissue>Spleen</tissue>
        <tissue>Testis</tissue>
    </source>
</reference>
<reference key="5">
    <citation type="journal article" date="2018" name="Nat. Genet.">
        <title>Mutations in SELENBP1, encoding a novel human methanethiol oxidase, cause extraoral halitosis.</title>
        <authorList>
            <person name="Pol A."/>
            <person name="Renkema G.H."/>
            <person name="Tangerman A."/>
            <person name="Winkel E.G."/>
            <person name="Engelke U.F."/>
            <person name="de Brouwer A.P.M."/>
            <person name="Lloyd K.C."/>
            <person name="Araiza R.S."/>
            <person name="van den Heuvel L."/>
            <person name="Omran H."/>
            <person name="Olbrich H."/>
            <person name="Oude Elberink M."/>
            <person name="Gilissen C."/>
            <person name="Rodenburg R.J."/>
            <person name="Sass J.O."/>
            <person name="Schwab K.O."/>
            <person name="Schaefer H."/>
            <person name="Venselaar H."/>
            <person name="Sequeira J.S."/>
            <person name="Op den Camp H.J.M."/>
            <person name="Wevers R.A."/>
        </authorList>
    </citation>
    <scope>FUNCTION</scope>
    <scope>CATALYTIC ACTIVITY</scope>
    <scope>PATHWAY</scope>
    <scope>BIOPHYSICOCHEMICAL PROPERTIES</scope>
    <scope>DISRUPTION PHENOTYPE</scope>
</reference>
<proteinExistence type="evidence at protein level"/>
<name>SBP1_MOUSE</name>
<evidence type="ECO:0000250" key="1"/>
<evidence type="ECO:0000250" key="2">
    <source>
        <dbReference type="UniProtKB" id="Q13228"/>
    </source>
</evidence>
<evidence type="ECO:0000250" key="3">
    <source>
        <dbReference type="UniProtKB" id="Q8VIF7"/>
    </source>
</evidence>
<evidence type="ECO:0000269" key="4">
    <source>
    </source>
</evidence>
<evidence type="ECO:0000269" key="5">
    <source>
    </source>
</evidence>
<evidence type="ECO:0000303" key="6">
    <source>
    </source>
</evidence>
<evidence type="ECO:0000305" key="7"/>
<gene>
    <name type="primary">Selenbp1</name>
    <name type="synonym">Lpsb</name>
</gene>
<organism>
    <name type="scientific">Mus musculus</name>
    <name type="common">Mouse</name>
    <dbReference type="NCBI Taxonomy" id="10090"/>
    <lineage>
        <taxon>Eukaryota</taxon>
        <taxon>Metazoa</taxon>
        <taxon>Chordata</taxon>
        <taxon>Craniata</taxon>
        <taxon>Vertebrata</taxon>
        <taxon>Euteleostomi</taxon>
        <taxon>Mammalia</taxon>
        <taxon>Eutheria</taxon>
        <taxon>Euarchontoglires</taxon>
        <taxon>Glires</taxon>
        <taxon>Rodentia</taxon>
        <taxon>Myomorpha</taxon>
        <taxon>Muroidea</taxon>
        <taxon>Muridae</taxon>
        <taxon>Murinae</taxon>
        <taxon>Mus</taxon>
        <taxon>Mus</taxon>
    </lineage>
</organism>
<comment type="function">
    <text evidence="3 5">Catalyzes the oxidation of methanethiol, an organosulfur compound known to be produced in substantial amounts by gut bacteria (PubMed:29255262). Selenium-binding protein which may be involved in the sensing of reactive xenobiotics in the cytoplasm. May be involved in intra-Golgi protein transport (By similarity).</text>
</comment>
<comment type="catalytic activity">
    <reaction evidence="5">
        <text>methanethiol + O2 + H2O = hydrogen sulfide + formaldehyde + H2O2 + H(+)</text>
        <dbReference type="Rhea" id="RHEA:11812"/>
        <dbReference type="ChEBI" id="CHEBI:15377"/>
        <dbReference type="ChEBI" id="CHEBI:15378"/>
        <dbReference type="ChEBI" id="CHEBI:15379"/>
        <dbReference type="ChEBI" id="CHEBI:16007"/>
        <dbReference type="ChEBI" id="CHEBI:16240"/>
        <dbReference type="ChEBI" id="CHEBI:16842"/>
        <dbReference type="ChEBI" id="CHEBI:29919"/>
        <dbReference type="EC" id="1.8.3.4"/>
    </reaction>
</comment>
<comment type="biophysicochemical properties">
    <kinetics>
        <KM evidence="5">5 nM for methanethiol</KM>
    </kinetics>
</comment>
<comment type="pathway">
    <text evidence="5">Organosulfur degradation.</text>
</comment>
<comment type="subunit">
    <text evidence="1">Interacts with USP33.</text>
</comment>
<comment type="subcellular location">
    <subcellularLocation>
        <location evidence="2">Nucleus</location>
    </subcellularLocation>
    <subcellularLocation>
        <location evidence="2">Cytoplasm</location>
        <location evidence="2">Cytosol</location>
    </subcellularLocation>
    <subcellularLocation>
        <location evidence="3">Membrane</location>
        <topology evidence="3">Peripheral membrane protein</topology>
    </subcellularLocation>
    <text evidence="3">May associate with Golgi membrane (By similarity). May associate with the membrane of autophagosomes (By similarity).</text>
</comment>
<comment type="tissue specificity">
    <text>Highly expressed in liver, kidney and, to a lesser extent, lung.</text>
</comment>
<comment type="PTM">
    <text evidence="1">The N-terminus is blocked.</text>
</comment>
<comment type="disruption phenotype">
    <text evidence="5">SELENBP1 knockout results in accumulation of dimethylsulfoxide in the plasma. Methanethiol oxidase activity measured in tissues from knockout mice is significantly lower that in normal tissues.</text>
</comment>
<comment type="similarity">
    <text evidence="7">Belongs to the selenium-binding protein family.</text>
</comment>
<sequence>MATKCTKCGPGYSTPLEAMKGPREEIVYLPCIYRNTGTEAPDYLATVDVDPKSPQYSQVIHRLPMPYLKDELHHSGWNTCSSCFGDSTKSRNKLILPGLISSRIYVVDVGSEPRAPKLHKVIEASEIQAKCNVSSLHTSHCLASGEVMVSTLGDLQGNGKGSFVLLDGETFEVKGTWEKPGDAAPMGYDFWYQPRHNVMVSTEWAAPNVFKDGFNPAHVEAGLYGSRIFVWDWQRHEIIQTLQMTDGLIPLEIRFLHDPSATQGFVGCALSSNIQRFYKNAEGTWSVEKVIQVPSKKVKGWMLPEMPGLITDILLSLDDRFLYFSNWLHGDIRQYDISNPQKPRLAGQIFLGGSIVRGGSVQVLEDQELTCQPEPLVVKGKRIPGGPQMIQLSLDGKRLYATTSLYSAWDKQFYPDLIREGSMMLQIDVDTVNGGLKLNPNFLVDFGKEPLGPALAHELRYPGGDCSSDIWI</sequence>
<dbReference type="EC" id="1.8.3.4" evidence="5"/>
<dbReference type="EMBL" id="M32032">
    <property type="protein sequence ID" value="AAA40104.1"/>
    <property type="molecule type" value="mRNA"/>
</dbReference>
<dbReference type="EMBL" id="BC011202">
    <property type="protein sequence ID" value="AAH11202.1"/>
    <property type="molecule type" value="mRNA"/>
</dbReference>
<dbReference type="CCDS" id="CCDS38540.1"/>
<dbReference type="PIR" id="S27878">
    <property type="entry name" value="S27878"/>
</dbReference>
<dbReference type="RefSeq" id="NP_033176.2">
    <property type="nucleotide sequence ID" value="NM_009150.3"/>
</dbReference>
<dbReference type="SMR" id="P17563"/>
<dbReference type="BioGRID" id="203156">
    <property type="interactions" value="10"/>
</dbReference>
<dbReference type="FunCoup" id="P17563">
    <property type="interactions" value="841"/>
</dbReference>
<dbReference type="IntAct" id="P17563">
    <property type="interactions" value="2"/>
</dbReference>
<dbReference type="MINT" id="P17563"/>
<dbReference type="STRING" id="10090.ENSMUSP00000088349"/>
<dbReference type="GlyGen" id="P17563">
    <property type="glycosylation" value="2 sites, 1 O-linked glycan (2 sites)"/>
</dbReference>
<dbReference type="iPTMnet" id="P17563"/>
<dbReference type="PhosphoSitePlus" id="P17563"/>
<dbReference type="SwissPalm" id="P17563"/>
<dbReference type="REPRODUCTION-2DPAGE" id="IPI00623845"/>
<dbReference type="REPRODUCTION-2DPAGE" id="P17563"/>
<dbReference type="jPOST" id="P17563"/>
<dbReference type="PaxDb" id="10090-ENSMUSP00000088349"/>
<dbReference type="PeptideAtlas" id="P17563"/>
<dbReference type="ProteomicsDB" id="255462"/>
<dbReference type="DNASU" id="20341"/>
<dbReference type="Ensembl" id="ENSMUST00000090839.12">
    <property type="protein sequence ID" value="ENSMUSP00000088349.6"/>
    <property type="gene ID" value="ENSMUSG00000068874.14"/>
</dbReference>
<dbReference type="GeneID" id="20341"/>
<dbReference type="KEGG" id="mmu:20341"/>
<dbReference type="UCSC" id="uc008qhf.1">
    <property type="organism name" value="mouse"/>
</dbReference>
<dbReference type="AGR" id="MGI:96825"/>
<dbReference type="CTD" id="8991"/>
<dbReference type="MGI" id="MGI:96825">
    <property type="gene designation" value="Selenbp1"/>
</dbReference>
<dbReference type="VEuPathDB" id="HostDB:ENSMUSG00000068874"/>
<dbReference type="eggNOG" id="KOG0918">
    <property type="taxonomic scope" value="Eukaryota"/>
</dbReference>
<dbReference type="GeneTree" id="ENSGT00390000014244"/>
<dbReference type="HOGENOM" id="CLU_032512_0_0_1"/>
<dbReference type="InParanoid" id="P17563"/>
<dbReference type="OMA" id="AYDFWWH"/>
<dbReference type="OrthoDB" id="10252446at2759"/>
<dbReference type="PhylomeDB" id="P17563"/>
<dbReference type="TreeFam" id="TF315241"/>
<dbReference type="SABIO-RK" id="P17563"/>
<dbReference type="BioGRID-ORCS" id="20341">
    <property type="hits" value="0 hits in 58 CRISPR screens"/>
</dbReference>
<dbReference type="ChiTaRS" id="Selenbp1">
    <property type="organism name" value="mouse"/>
</dbReference>
<dbReference type="PRO" id="PR:P17563"/>
<dbReference type="Proteomes" id="UP000000589">
    <property type="component" value="Chromosome 3"/>
</dbReference>
<dbReference type="RNAct" id="P17563">
    <property type="molecule type" value="protein"/>
</dbReference>
<dbReference type="Bgee" id="ENSMUSG00000068874">
    <property type="expression patterns" value="Expressed in right lung lobe and 206 other cell types or tissues"/>
</dbReference>
<dbReference type="ExpressionAtlas" id="P17563">
    <property type="expression patterns" value="baseline and differential"/>
</dbReference>
<dbReference type="GO" id="GO:0005829">
    <property type="term" value="C:cytosol"/>
    <property type="evidence" value="ECO:0007669"/>
    <property type="project" value="UniProtKB-SubCell"/>
</dbReference>
<dbReference type="GO" id="GO:0016020">
    <property type="term" value="C:membrane"/>
    <property type="evidence" value="ECO:0007669"/>
    <property type="project" value="UniProtKB-SubCell"/>
</dbReference>
<dbReference type="GO" id="GO:0005634">
    <property type="term" value="C:nucleus"/>
    <property type="evidence" value="ECO:0007669"/>
    <property type="project" value="UniProtKB-SubCell"/>
</dbReference>
<dbReference type="GO" id="GO:0018549">
    <property type="term" value="F:methanethiol oxidase activity"/>
    <property type="evidence" value="ECO:0007669"/>
    <property type="project" value="UniProtKB-EC"/>
</dbReference>
<dbReference type="GO" id="GO:0008430">
    <property type="term" value="F:selenium binding"/>
    <property type="evidence" value="ECO:0000304"/>
    <property type="project" value="MGI"/>
</dbReference>
<dbReference type="GO" id="GO:0050873">
    <property type="term" value="P:brown fat cell differentiation"/>
    <property type="evidence" value="ECO:0000314"/>
    <property type="project" value="MGI"/>
</dbReference>
<dbReference type="GO" id="GO:0015031">
    <property type="term" value="P:protein transport"/>
    <property type="evidence" value="ECO:0007669"/>
    <property type="project" value="UniProtKB-KW"/>
</dbReference>
<dbReference type="InterPro" id="IPR008826">
    <property type="entry name" value="Se-bd"/>
</dbReference>
<dbReference type="PANTHER" id="PTHR23300">
    <property type="entry name" value="METHANETHIOL OXIDASE"/>
    <property type="match status" value="1"/>
</dbReference>
<dbReference type="PANTHER" id="PTHR23300:SF0">
    <property type="entry name" value="METHANETHIOL OXIDASE"/>
    <property type="match status" value="1"/>
</dbReference>
<dbReference type="Pfam" id="PF05694">
    <property type="entry name" value="SBP56"/>
    <property type="match status" value="1"/>
</dbReference>
<dbReference type="SUPFAM" id="SSF75011">
    <property type="entry name" value="3-carboxy-cis,cis-mucoante lactonizing enzyme"/>
    <property type="match status" value="1"/>
</dbReference>
<feature type="initiator methionine" description="Removed" evidence="2">
    <location>
        <position position="1"/>
    </location>
</feature>
<feature type="chain" id="PRO_0000174634" description="Methanethiol oxidase">
    <location>
        <begin position="2"/>
        <end position="472"/>
    </location>
</feature>
<feature type="modified residue" description="N-acetylalanine" evidence="2">
    <location>
        <position position="2"/>
    </location>
</feature>
<feature type="modified residue" description="Phosphoserine" evidence="2">
    <location>
        <position position="111"/>
    </location>
</feature>
<feature type="modified residue" description="Phosphoserine" evidence="4">
    <location>
        <position position="467"/>
    </location>
</feature>
<feature type="sequence conflict" description="In Ref. 1; AAA40104." evidence="7" ref="1">
    <original>LSS</original>
    <variation>SAP</variation>
    <location>
        <begin position="270"/>
        <end position="272"/>
    </location>
</feature>
<feature type="sequence conflict" description="In Ref. 1; AAA40104." evidence="7" ref="1">
    <original>EM</original>
    <variation>GV</variation>
    <location>
        <begin position="305"/>
        <end position="306"/>
    </location>
</feature>
<feature type="sequence conflict" description="In Ref. 1; AAA40104." evidence="7" ref="1">
    <original>P</original>
    <variation>A</variation>
    <location>
        <position position="453"/>
    </location>
</feature>
<accession>P17563</accession>
<accession>Q91X87</accession>
<keyword id="KW-0007">Acetylation</keyword>
<keyword id="KW-0963">Cytoplasm</keyword>
<keyword id="KW-0472">Membrane</keyword>
<keyword id="KW-0539">Nucleus</keyword>
<keyword id="KW-0560">Oxidoreductase</keyword>
<keyword id="KW-0597">Phosphoprotein</keyword>
<keyword id="KW-0653">Protein transport</keyword>
<keyword id="KW-1185">Reference proteome</keyword>
<keyword id="KW-0711">Selenium</keyword>
<keyword id="KW-0813">Transport</keyword>